<gene>
    <name type="primary">ERG27</name>
    <name type="ordered locus">YALI0B17644g</name>
</gene>
<keyword id="KW-0444">Lipid biosynthesis</keyword>
<keyword id="KW-0443">Lipid metabolism</keyword>
<keyword id="KW-0521">NADP</keyword>
<keyword id="KW-0560">Oxidoreductase</keyword>
<keyword id="KW-1185">Reference proteome</keyword>
<keyword id="KW-0752">Steroid biosynthesis</keyword>
<protein>
    <recommendedName>
        <fullName>3-keto-steroid reductase</fullName>
        <ecNumber>1.1.1.270</ecNumber>
    </recommendedName>
</protein>
<name>ERG27_YARLI</name>
<dbReference type="EC" id="1.1.1.270"/>
<dbReference type="EMBL" id="CR382128">
    <property type="protein sequence ID" value="CAG83277.1"/>
    <property type="molecule type" value="Genomic_DNA"/>
</dbReference>
<dbReference type="RefSeq" id="XP_501024.1">
    <property type="nucleotide sequence ID" value="XM_501024.1"/>
</dbReference>
<dbReference type="SMR" id="Q6CE88"/>
<dbReference type="FunCoup" id="Q6CE88">
    <property type="interactions" value="140"/>
</dbReference>
<dbReference type="STRING" id="284591.Q6CE88"/>
<dbReference type="EnsemblFungi" id="CAG83277">
    <property type="protein sequence ID" value="CAG83277"/>
    <property type="gene ID" value="YALI0_B17644g"/>
</dbReference>
<dbReference type="KEGG" id="yli:2907211"/>
<dbReference type="VEuPathDB" id="FungiDB:YALI0_B17644g"/>
<dbReference type="HOGENOM" id="CLU_029944_1_0_1"/>
<dbReference type="InParanoid" id="Q6CE88"/>
<dbReference type="OMA" id="WHNIDGY"/>
<dbReference type="OrthoDB" id="82282at4891"/>
<dbReference type="UniPathway" id="UPA00770">
    <property type="reaction ID" value="UER00758"/>
</dbReference>
<dbReference type="Proteomes" id="UP000001300">
    <property type="component" value="Chromosome B"/>
</dbReference>
<dbReference type="GO" id="GO:0005789">
    <property type="term" value="C:endoplasmic reticulum membrane"/>
    <property type="evidence" value="ECO:0000318"/>
    <property type="project" value="GO_Central"/>
</dbReference>
<dbReference type="GO" id="GO:0005811">
    <property type="term" value="C:lipid droplet"/>
    <property type="evidence" value="ECO:0000318"/>
    <property type="project" value="GO_Central"/>
</dbReference>
<dbReference type="GO" id="GO:0000253">
    <property type="term" value="F:3-beta-hydroxysteroid 3-dehydrogenase (NADP+) activity"/>
    <property type="evidence" value="ECO:0000318"/>
    <property type="project" value="GO_Central"/>
</dbReference>
<dbReference type="GO" id="GO:0006696">
    <property type="term" value="P:ergosterol biosynthetic process"/>
    <property type="evidence" value="ECO:0000318"/>
    <property type="project" value="GO_Central"/>
</dbReference>
<dbReference type="FunFam" id="3.40.50.720:FF:000525">
    <property type="entry name" value="3-keto-steroid reductase"/>
    <property type="match status" value="1"/>
</dbReference>
<dbReference type="Gene3D" id="3.40.50.720">
    <property type="entry name" value="NAD(P)-binding Rossmann-like Domain"/>
    <property type="match status" value="1"/>
</dbReference>
<dbReference type="InterPro" id="IPR051593">
    <property type="entry name" value="Ergosterol_Biosynth_ERG27"/>
</dbReference>
<dbReference type="InterPro" id="IPR036291">
    <property type="entry name" value="NAD(P)-bd_dom_sf"/>
</dbReference>
<dbReference type="InterPro" id="IPR002347">
    <property type="entry name" value="SDR_fam"/>
</dbReference>
<dbReference type="PANTHER" id="PTHR43647:SF1">
    <property type="entry name" value="3-KETO-STEROID REDUCTASE ERG27"/>
    <property type="match status" value="1"/>
</dbReference>
<dbReference type="PANTHER" id="PTHR43647">
    <property type="entry name" value="DEHYDROGENASE"/>
    <property type="match status" value="1"/>
</dbReference>
<dbReference type="Pfam" id="PF00106">
    <property type="entry name" value="adh_short"/>
    <property type="match status" value="1"/>
</dbReference>
<dbReference type="PRINTS" id="PR00081">
    <property type="entry name" value="GDHRDH"/>
</dbReference>
<dbReference type="SUPFAM" id="SSF51735">
    <property type="entry name" value="NAD(P)-binding Rossmann-fold domains"/>
    <property type="match status" value="1"/>
</dbReference>
<reference key="1">
    <citation type="journal article" date="2004" name="Nature">
        <title>Genome evolution in yeasts.</title>
        <authorList>
            <person name="Dujon B."/>
            <person name="Sherman D."/>
            <person name="Fischer G."/>
            <person name="Durrens P."/>
            <person name="Casaregola S."/>
            <person name="Lafontaine I."/>
            <person name="de Montigny J."/>
            <person name="Marck C."/>
            <person name="Neuveglise C."/>
            <person name="Talla E."/>
            <person name="Goffard N."/>
            <person name="Frangeul L."/>
            <person name="Aigle M."/>
            <person name="Anthouard V."/>
            <person name="Babour A."/>
            <person name="Barbe V."/>
            <person name="Barnay S."/>
            <person name="Blanchin S."/>
            <person name="Beckerich J.-M."/>
            <person name="Beyne E."/>
            <person name="Bleykasten C."/>
            <person name="Boisrame A."/>
            <person name="Boyer J."/>
            <person name="Cattolico L."/>
            <person name="Confanioleri F."/>
            <person name="de Daruvar A."/>
            <person name="Despons L."/>
            <person name="Fabre E."/>
            <person name="Fairhead C."/>
            <person name="Ferry-Dumazet H."/>
            <person name="Groppi A."/>
            <person name="Hantraye F."/>
            <person name="Hennequin C."/>
            <person name="Jauniaux N."/>
            <person name="Joyet P."/>
            <person name="Kachouri R."/>
            <person name="Kerrest A."/>
            <person name="Koszul R."/>
            <person name="Lemaire M."/>
            <person name="Lesur I."/>
            <person name="Ma L."/>
            <person name="Muller H."/>
            <person name="Nicaud J.-M."/>
            <person name="Nikolski M."/>
            <person name="Oztas S."/>
            <person name="Ozier-Kalogeropoulos O."/>
            <person name="Pellenz S."/>
            <person name="Potier S."/>
            <person name="Richard G.-F."/>
            <person name="Straub M.-L."/>
            <person name="Suleau A."/>
            <person name="Swennen D."/>
            <person name="Tekaia F."/>
            <person name="Wesolowski-Louvel M."/>
            <person name="Westhof E."/>
            <person name="Wirth B."/>
            <person name="Zeniou-Meyer M."/>
            <person name="Zivanovic Y."/>
            <person name="Bolotin-Fukuhara M."/>
            <person name="Thierry A."/>
            <person name="Bouchier C."/>
            <person name="Caudron B."/>
            <person name="Scarpelli C."/>
            <person name="Gaillardin C."/>
            <person name="Weissenbach J."/>
            <person name="Wincker P."/>
            <person name="Souciet J.-L."/>
        </authorList>
    </citation>
    <scope>NUCLEOTIDE SEQUENCE [LARGE SCALE GENOMIC DNA]</scope>
    <source>
        <strain>CLIB 122 / E 150</strain>
    </source>
</reference>
<organism>
    <name type="scientific">Yarrowia lipolytica (strain CLIB 122 / E 150)</name>
    <name type="common">Yeast</name>
    <name type="synonym">Candida lipolytica</name>
    <dbReference type="NCBI Taxonomy" id="284591"/>
    <lineage>
        <taxon>Eukaryota</taxon>
        <taxon>Fungi</taxon>
        <taxon>Dikarya</taxon>
        <taxon>Ascomycota</taxon>
        <taxon>Saccharomycotina</taxon>
        <taxon>Dipodascomycetes</taxon>
        <taxon>Dipodascales</taxon>
        <taxon>Dipodascales incertae sedis</taxon>
        <taxon>Yarrowia</taxon>
    </lineage>
</organism>
<sequence>MIHNRKTQTVVITGASSNLGIAIGKRLIDEKKEDAHLTIVVTSRTLRNVRVAIKTLKAHAVAKEVGPEVDFDYLLFDLADMTSINGALVELKLRFSRIDTLIFNSNAANYIGINWPLAMWRFTTQFKSEIENPSCMIQAVGVKSDDGMGSAYQSNVFGPWYMVLELTEQLKNGGKVIWISSITSSEKYVDLEDIELIHNKEPYKGSKRLIDVAHNYYSPKLEEEHGIYSYLTDPGIFTSSSASEYLNIFSAFGMYLMFYFARLIGLTTMNIDPYKGANVPVWVTLSEDPSALKREYRLGSRTGRWGTEMMDATKLQYEGSEEVGAYIDKGVGEWREKLKDQIN</sequence>
<evidence type="ECO:0000250" key="1"/>
<evidence type="ECO:0000250" key="2">
    <source>
        <dbReference type="UniProtKB" id="L0E2Z4"/>
    </source>
</evidence>
<evidence type="ECO:0000250" key="3">
    <source>
        <dbReference type="UniProtKB" id="O93868"/>
    </source>
</evidence>
<evidence type="ECO:0000305" key="4"/>
<proteinExistence type="inferred from homology"/>
<accession>Q6CE88</accession>
<comment type="function">
    <text evidence="1">Responsible for the reduction of the keto group on the C-3 of sterols.</text>
</comment>
<comment type="catalytic activity">
    <reaction>
        <text>a 3beta-hydroxysteroid + NADP(+) = a 3-oxosteroid + NADPH + H(+)</text>
        <dbReference type="Rhea" id="RHEA:34787"/>
        <dbReference type="ChEBI" id="CHEBI:15378"/>
        <dbReference type="ChEBI" id="CHEBI:36836"/>
        <dbReference type="ChEBI" id="CHEBI:47788"/>
        <dbReference type="ChEBI" id="CHEBI:57783"/>
        <dbReference type="ChEBI" id="CHEBI:58349"/>
        <dbReference type="EC" id="1.1.1.270"/>
    </reaction>
</comment>
<comment type="pathway">
    <text>Steroid biosynthesis; zymosterol biosynthesis; zymosterol from lanosterol: step 5/6.</text>
</comment>
<comment type="similarity">
    <text evidence="4">Belongs to the short-chain dehydrogenases/reductases (SDR) family. ERG27 subfamily.</text>
</comment>
<feature type="chain" id="PRO_0000054594" description="3-keto-steroid reductase">
    <location>
        <begin position="1"/>
        <end position="343"/>
    </location>
</feature>
<feature type="active site" description="Proton donor" evidence="3">
    <location>
        <position position="180"/>
    </location>
</feature>
<feature type="active site" description="Proton donor" evidence="3">
    <location>
        <position position="203"/>
    </location>
</feature>
<feature type="active site" description="Lowers pKa of active site Tyr" evidence="3">
    <location>
        <position position="207"/>
    </location>
</feature>
<feature type="binding site" evidence="2">
    <location>
        <position position="19"/>
    </location>
    <ligand>
        <name>NADP(+)</name>
        <dbReference type="ChEBI" id="CHEBI:58349"/>
    </ligand>
</feature>
<feature type="binding site" evidence="2">
    <location>
        <position position="42"/>
    </location>
    <ligand>
        <name>NADP(+)</name>
        <dbReference type="ChEBI" id="CHEBI:58349"/>
    </ligand>
</feature>
<feature type="binding site" evidence="3">
    <location>
        <position position="203"/>
    </location>
    <ligand>
        <name>NADP(+)</name>
        <dbReference type="ChEBI" id="CHEBI:58349"/>
    </ligand>
</feature>
<feature type="binding site" evidence="3">
    <location>
        <position position="207"/>
    </location>
    <ligand>
        <name>NADP(+)</name>
        <dbReference type="ChEBI" id="CHEBI:58349"/>
    </ligand>
</feature>
<feature type="binding site" evidence="2">
    <location>
        <position position="239"/>
    </location>
    <ligand>
        <name>NADP(+)</name>
        <dbReference type="ChEBI" id="CHEBI:58349"/>
    </ligand>
</feature>